<keyword id="KW-0903">Direct protein sequencing</keyword>
<keyword id="KW-0560">Oxidoreductase</keyword>
<comment type="function">
    <text>Provides the reduced form of flavin mononucleotide for the PIIA synthase reaction.</text>
</comment>
<name>SNAC_STRPR</name>
<proteinExistence type="evidence at protein level"/>
<protein>
    <recommendedName>
        <fullName>NADH:riboflavin 5'-phosphate oxidoreductase</fullName>
    </recommendedName>
    <alternativeName>
        <fullName>NADH:FMN oxidoreductase</fullName>
    </alternativeName>
</protein>
<feature type="initiator methionine" description="Removed" evidence="1">
    <location>
        <position position="1"/>
    </location>
</feature>
<feature type="chain" id="PRO_0000072002" description="NADH:riboflavin 5'-phosphate oxidoreductase">
    <location>
        <begin position="2"/>
        <end position="176"/>
    </location>
</feature>
<reference key="1">
    <citation type="journal article" date="1995" name="J. Bacteriol.">
        <title>Cloning and analysis of structural genes from Streptomyces pristinaespiralis encoding enzymes involved in the conversion of pristinamycin IIB to pristinamycin IIA (PIIA): PIIA synthase and NADH:riboflavin 5'-phosphate oxidoreductase.</title>
        <authorList>
            <person name="Blanc V."/>
            <person name="Lagneaux D."/>
            <person name="Didier P."/>
            <person name="Gil P."/>
            <person name="Lacroix P."/>
            <person name="Crouzet J."/>
        </authorList>
    </citation>
    <scope>NUCLEOTIDE SEQUENCE [GENOMIC DNA]</scope>
    <source>
        <strain>SP92</strain>
    </source>
</reference>
<reference key="2">
    <citation type="journal article" date="1995" name="J. Bacteriol.">
        <title>Purification of the two-enzyme system catalyzing the oxidation of the D-proline residue of pristinamycin IIB during the last step of pristinamycin IIA biosynthesis.</title>
        <authorList>
            <person name="Thibaut D."/>
            <person name="Ratet N."/>
            <person name="Bisch D."/>
            <person name="Faucher D."/>
            <person name="Debussche L."/>
            <person name="Blanche F."/>
        </authorList>
    </citation>
    <scope>PROTEIN SEQUENCE OF 2-28; 102-122 AND 150-162</scope>
</reference>
<dbReference type="EMBL" id="U21216">
    <property type="protein sequence ID" value="AAA83566.1"/>
    <property type="molecule type" value="Genomic_DNA"/>
</dbReference>
<dbReference type="RefSeq" id="WP_005321616.1">
    <property type="nucleotide sequence ID" value="NZ_JBIYEY010000002.1"/>
</dbReference>
<dbReference type="SMR" id="P54994"/>
<dbReference type="STRING" id="38300.SPRI_0289"/>
<dbReference type="GeneID" id="97231908"/>
<dbReference type="OMA" id="WWGFTAS"/>
<dbReference type="OrthoDB" id="3677205at2"/>
<dbReference type="GO" id="GO:0010181">
    <property type="term" value="F:FMN binding"/>
    <property type="evidence" value="ECO:0007669"/>
    <property type="project" value="InterPro"/>
</dbReference>
<dbReference type="GO" id="GO:0042602">
    <property type="term" value="F:riboflavin reductase (NADPH) activity"/>
    <property type="evidence" value="ECO:0007669"/>
    <property type="project" value="TreeGrafter"/>
</dbReference>
<dbReference type="GO" id="GO:0006208">
    <property type="term" value="P:pyrimidine nucleobase catabolic process"/>
    <property type="evidence" value="ECO:0007669"/>
    <property type="project" value="TreeGrafter"/>
</dbReference>
<dbReference type="Gene3D" id="2.30.110.10">
    <property type="entry name" value="Electron Transport, Fmn-binding Protein, Chain A"/>
    <property type="match status" value="1"/>
</dbReference>
<dbReference type="InterPro" id="IPR002563">
    <property type="entry name" value="Flavin_Rdtase-like_dom"/>
</dbReference>
<dbReference type="InterPro" id="IPR050268">
    <property type="entry name" value="NADH-dep_flavin_reductase"/>
</dbReference>
<dbReference type="InterPro" id="IPR012349">
    <property type="entry name" value="Split_barrel_FMN-bd"/>
</dbReference>
<dbReference type="PANTHER" id="PTHR30466">
    <property type="entry name" value="FLAVIN REDUCTASE"/>
    <property type="match status" value="1"/>
</dbReference>
<dbReference type="PANTHER" id="PTHR30466:SF1">
    <property type="entry name" value="FMN REDUCTASE (NADH) RUTF"/>
    <property type="match status" value="1"/>
</dbReference>
<dbReference type="Pfam" id="PF01613">
    <property type="entry name" value="Flavin_Reduct"/>
    <property type="match status" value="1"/>
</dbReference>
<dbReference type="SMART" id="SM00903">
    <property type="entry name" value="Flavin_Reduct"/>
    <property type="match status" value="1"/>
</dbReference>
<dbReference type="SUPFAM" id="SSF50475">
    <property type="entry name" value="FMN-binding split barrel"/>
    <property type="match status" value="1"/>
</dbReference>
<evidence type="ECO:0000269" key="1">
    <source>
    </source>
</evidence>
<sequence>MTGADDPARPAVGPQSFRDAMAQLASPVTVVTVLDAAGRRHGFTAGSVVSVSLDPPLVMVGIALTSSCHTAMAAAAEFCVSILGEDQRAVAKRCATHGADRFAGGEFAAWDGTGVPYLPDAKVVLRCRTTDVVRAGDHDLVLGTPVEIRTGDPAKPPLLWYRRDFHTPTPTTPALA</sequence>
<organism>
    <name type="scientific">Streptomyces pristinaespiralis</name>
    <dbReference type="NCBI Taxonomy" id="38300"/>
    <lineage>
        <taxon>Bacteria</taxon>
        <taxon>Bacillati</taxon>
        <taxon>Actinomycetota</taxon>
        <taxon>Actinomycetes</taxon>
        <taxon>Kitasatosporales</taxon>
        <taxon>Streptomycetaceae</taxon>
        <taxon>Streptomyces</taxon>
    </lineage>
</organism>
<accession>P54994</accession>
<gene>
    <name type="primary">snaC</name>
</gene>